<accession>Q5TW90</accession>
<feature type="chain" id="PRO_0000312794" description="Protein mab-21">
    <location>
        <begin position="1"/>
        <end position="365"/>
    </location>
</feature>
<name>MAB21_ANOGA</name>
<dbReference type="EMBL" id="AAAB01008811">
    <property type="protein sequence ID" value="EAL41690.3"/>
    <property type="molecule type" value="Genomic_DNA"/>
</dbReference>
<dbReference type="RefSeq" id="XP_560259.3">
    <property type="nucleotide sequence ID" value="XM_560259.3"/>
</dbReference>
<dbReference type="SMR" id="Q5TW90"/>
<dbReference type="FunCoup" id="Q5TW90">
    <property type="interactions" value="252"/>
</dbReference>
<dbReference type="STRING" id="7165.Q5TW90"/>
<dbReference type="PaxDb" id="7165-AGAP001034-PA"/>
<dbReference type="VEuPathDB" id="VectorBase:AGAMI1_004685"/>
<dbReference type="VEuPathDB" id="VectorBase:AGAP001033"/>
<dbReference type="eggNOG" id="KOG3963">
    <property type="taxonomic scope" value="Eukaryota"/>
</dbReference>
<dbReference type="HOGENOM" id="CLU_045315_0_0_1"/>
<dbReference type="InParanoid" id="Q5TW90"/>
<dbReference type="OMA" id="RESIYMK"/>
<dbReference type="OrthoDB" id="5961151at2759"/>
<dbReference type="PhylomeDB" id="Q5TW90"/>
<dbReference type="Proteomes" id="UP000007062">
    <property type="component" value="Chromosome X"/>
</dbReference>
<dbReference type="FunFam" id="1.10.1410.40:FF:000002">
    <property type="entry name" value="protein mab-21-like 1"/>
    <property type="match status" value="1"/>
</dbReference>
<dbReference type="FunFam" id="3.30.460.90:FF:000001">
    <property type="entry name" value="protein mab-21-like 2"/>
    <property type="match status" value="1"/>
</dbReference>
<dbReference type="Gene3D" id="1.10.1410.40">
    <property type="match status" value="1"/>
</dbReference>
<dbReference type="Gene3D" id="3.30.460.90">
    <property type="match status" value="1"/>
</dbReference>
<dbReference type="InterPro" id="IPR046903">
    <property type="entry name" value="Mab-21-like_nuc_Trfase"/>
</dbReference>
<dbReference type="InterPro" id="IPR046906">
    <property type="entry name" value="Mab-21_HhH/H2TH-like"/>
</dbReference>
<dbReference type="InterPro" id="IPR024810">
    <property type="entry name" value="MAB21L/cGLR"/>
</dbReference>
<dbReference type="PANTHER" id="PTHR10656">
    <property type="entry name" value="CELL FATE DETERMINING PROTEIN MAB21-RELATED"/>
    <property type="match status" value="1"/>
</dbReference>
<dbReference type="PANTHER" id="PTHR10656:SF70">
    <property type="entry name" value="PROTEIN MAB-21-RELATED"/>
    <property type="match status" value="1"/>
</dbReference>
<dbReference type="Pfam" id="PF03281">
    <property type="entry name" value="Mab-21"/>
    <property type="match status" value="1"/>
</dbReference>
<dbReference type="Pfam" id="PF20266">
    <property type="entry name" value="Mab-21_C"/>
    <property type="match status" value="1"/>
</dbReference>
<dbReference type="SMART" id="SM01265">
    <property type="entry name" value="Mab-21"/>
    <property type="match status" value="1"/>
</dbReference>
<comment type="similarity">
    <text evidence="1">Belongs to the mab-21 family.</text>
</comment>
<comment type="caution">
    <text evidence="1">It is uncertain whether Met-1 or Met-7 is the initiator.</text>
</comment>
<reference key="1">
    <citation type="journal article" date="2002" name="Science">
        <title>The genome sequence of the malaria mosquito Anopheles gambiae.</title>
        <authorList>
            <person name="Holt R.A."/>
            <person name="Subramanian G.M."/>
            <person name="Halpern A."/>
            <person name="Sutton G.G."/>
            <person name="Charlab R."/>
            <person name="Nusskern D.R."/>
            <person name="Wincker P."/>
            <person name="Clark A.G."/>
            <person name="Ribeiro J.M.C."/>
            <person name="Wides R."/>
            <person name="Salzberg S.L."/>
            <person name="Loftus B.J."/>
            <person name="Yandell M.D."/>
            <person name="Majoros W.H."/>
            <person name="Rusch D.B."/>
            <person name="Lai Z."/>
            <person name="Kraft C.L."/>
            <person name="Abril J.F."/>
            <person name="Anthouard V."/>
            <person name="Arensburger P."/>
            <person name="Atkinson P.W."/>
            <person name="Baden H."/>
            <person name="de Berardinis V."/>
            <person name="Baldwin D."/>
            <person name="Benes V."/>
            <person name="Biedler J."/>
            <person name="Blass C."/>
            <person name="Bolanos R."/>
            <person name="Boscus D."/>
            <person name="Barnstead M."/>
            <person name="Cai S."/>
            <person name="Center A."/>
            <person name="Chaturverdi K."/>
            <person name="Christophides G.K."/>
            <person name="Chrystal M.A.M."/>
            <person name="Clamp M."/>
            <person name="Cravchik A."/>
            <person name="Curwen V."/>
            <person name="Dana A."/>
            <person name="Delcher A."/>
            <person name="Dew I."/>
            <person name="Evans C.A."/>
            <person name="Flanigan M."/>
            <person name="Grundschober-Freimoser A."/>
            <person name="Friedli L."/>
            <person name="Gu Z."/>
            <person name="Guan P."/>
            <person name="Guigo R."/>
            <person name="Hillenmeyer M.E."/>
            <person name="Hladun S.L."/>
            <person name="Hogan J.R."/>
            <person name="Hong Y.S."/>
            <person name="Hoover J."/>
            <person name="Jaillon O."/>
            <person name="Ke Z."/>
            <person name="Kodira C.D."/>
            <person name="Kokoza E."/>
            <person name="Koutsos A."/>
            <person name="Letunic I."/>
            <person name="Levitsky A.A."/>
            <person name="Liang Y."/>
            <person name="Lin J.-J."/>
            <person name="Lobo N.F."/>
            <person name="Lopez J.R."/>
            <person name="Malek J.A."/>
            <person name="McIntosh T.C."/>
            <person name="Meister S."/>
            <person name="Miller J.R."/>
            <person name="Mobarry C."/>
            <person name="Mongin E."/>
            <person name="Murphy S.D."/>
            <person name="O'Brochta D.A."/>
            <person name="Pfannkoch C."/>
            <person name="Qi R."/>
            <person name="Regier M.A."/>
            <person name="Remington K."/>
            <person name="Shao H."/>
            <person name="Sharakhova M.V."/>
            <person name="Sitter C.D."/>
            <person name="Shetty J."/>
            <person name="Smith T.J."/>
            <person name="Strong R."/>
            <person name="Sun J."/>
            <person name="Thomasova D."/>
            <person name="Ton L.Q."/>
            <person name="Topalis P."/>
            <person name="Tu Z.J."/>
            <person name="Unger M.F."/>
            <person name="Walenz B."/>
            <person name="Wang A.H."/>
            <person name="Wang J."/>
            <person name="Wang M."/>
            <person name="Wang X."/>
            <person name="Woodford K.J."/>
            <person name="Wortman J.R."/>
            <person name="Wu M."/>
            <person name="Yao A."/>
            <person name="Zdobnov E.M."/>
            <person name="Zhang H."/>
            <person name="Zhao Q."/>
            <person name="Zhao S."/>
            <person name="Zhu S.C."/>
            <person name="Zhimulev I."/>
            <person name="Coluzzi M."/>
            <person name="della Torre A."/>
            <person name="Roth C.W."/>
            <person name="Louis C."/>
            <person name="Kalush F."/>
            <person name="Mural R.J."/>
            <person name="Myers E.W."/>
            <person name="Adams M.D."/>
            <person name="Smith H.O."/>
            <person name="Broder S."/>
            <person name="Gardner M.J."/>
            <person name="Fraser C.M."/>
            <person name="Birney E."/>
            <person name="Bork P."/>
            <person name="Brey P.T."/>
            <person name="Venter J.C."/>
            <person name="Weissenbach J."/>
            <person name="Kafatos F.C."/>
            <person name="Collins F.H."/>
            <person name="Hoffman S.L."/>
        </authorList>
    </citation>
    <scope>NUCLEOTIDE SEQUENCE [LARGE SCALE GENOMIC DNA]</scope>
    <source>
        <strain>PEST</strain>
    </source>
</reference>
<gene>
    <name type="primary">mab-21</name>
    <name type="ORF">AGAP001034</name>
</gene>
<evidence type="ECO:0000305" key="1"/>
<organism>
    <name type="scientific">Anopheles gambiae</name>
    <name type="common">African malaria mosquito</name>
    <dbReference type="NCBI Taxonomy" id="7165"/>
    <lineage>
        <taxon>Eukaryota</taxon>
        <taxon>Metazoa</taxon>
        <taxon>Ecdysozoa</taxon>
        <taxon>Arthropoda</taxon>
        <taxon>Hexapoda</taxon>
        <taxon>Insecta</taxon>
        <taxon>Pterygota</taxon>
        <taxon>Neoptera</taxon>
        <taxon>Endopterygota</taxon>
        <taxon>Diptera</taxon>
        <taxon>Nematocera</taxon>
        <taxon>Culicoidea</taxon>
        <taxon>Culicidae</taxon>
        <taxon>Anophelinae</taxon>
        <taxon>Anopheles</taxon>
    </lineage>
</organism>
<sequence>MLVPPEMIAVQSKLIYQMNKYCADRVQTRKAQIHKTIQEVCRVVQDVLKEVEVQEPRFISSLNDYNGRYDGLEVVSPTEFEIIIYLNQMGVLNFVDDGTLPGCAVLKLSDGRKRSMSLWVEFITASGYLSARKIRSRFQTLVAQACDKCSYRDSVKMIADTTEVKLRIRERIIVQITPAFKCAGLWPRSASHWPLPQIPWPHPNIVSEVKTEGFDMLSKECIALQGKNSAMEGDAWVLSFTEAENKLLQGGCRRRCLSILKTLRDRHLDLPGNPVTSYVMKTLLLYECEKHPREMEWDENCMGDRINGIFLQLISCLQCRRCPHYFLPNMDLFKGKSPGALENASKQVWRLTRIMLTNSRCLEEL</sequence>
<proteinExistence type="inferred from homology"/>
<keyword id="KW-1185">Reference proteome</keyword>
<protein>
    <recommendedName>
        <fullName>Protein mab-21</fullName>
    </recommendedName>
</protein>